<dbReference type="EMBL" id="CP001071">
    <property type="protein sequence ID" value="ACD04424.1"/>
    <property type="molecule type" value="Genomic_DNA"/>
</dbReference>
<dbReference type="RefSeq" id="WP_012419639.1">
    <property type="nucleotide sequence ID" value="NC_010655.1"/>
</dbReference>
<dbReference type="SMR" id="B2UPE7"/>
<dbReference type="STRING" id="349741.Amuc_0587"/>
<dbReference type="PaxDb" id="349741-Amuc_0587"/>
<dbReference type="KEGG" id="amu:Amuc_0587"/>
<dbReference type="eggNOG" id="COG2262">
    <property type="taxonomic scope" value="Bacteria"/>
</dbReference>
<dbReference type="HOGENOM" id="CLU_019597_0_1_0"/>
<dbReference type="OrthoDB" id="9812272at2"/>
<dbReference type="BioCyc" id="AMUC349741:G1GBX-644-MONOMER"/>
<dbReference type="Proteomes" id="UP000001031">
    <property type="component" value="Chromosome"/>
</dbReference>
<dbReference type="GO" id="GO:0005737">
    <property type="term" value="C:cytoplasm"/>
    <property type="evidence" value="ECO:0007669"/>
    <property type="project" value="UniProtKB-SubCell"/>
</dbReference>
<dbReference type="GO" id="GO:0005525">
    <property type="term" value="F:GTP binding"/>
    <property type="evidence" value="ECO:0007669"/>
    <property type="project" value="UniProtKB-UniRule"/>
</dbReference>
<dbReference type="GO" id="GO:0003924">
    <property type="term" value="F:GTPase activity"/>
    <property type="evidence" value="ECO:0007669"/>
    <property type="project" value="UniProtKB-UniRule"/>
</dbReference>
<dbReference type="GO" id="GO:0046872">
    <property type="term" value="F:metal ion binding"/>
    <property type="evidence" value="ECO:0007669"/>
    <property type="project" value="UniProtKB-KW"/>
</dbReference>
<dbReference type="GO" id="GO:0043022">
    <property type="term" value="F:ribosome binding"/>
    <property type="evidence" value="ECO:0007669"/>
    <property type="project" value="TreeGrafter"/>
</dbReference>
<dbReference type="CDD" id="cd01878">
    <property type="entry name" value="HflX"/>
    <property type="match status" value="1"/>
</dbReference>
<dbReference type="Gene3D" id="6.10.250.2860">
    <property type="match status" value="1"/>
</dbReference>
<dbReference type="Gene3D" id="3.40.50.11060">
    <property type="entry name" value="GTPase HflX, N-terminal domain"/>
    <property type="match status" value="1"/>
</dbReference>
<dbReference type="Gene3D" id="3.40.50.300">
    <property type="entry name" value="P-loop containing nucleotide triphosphate hydrolases"/>
    <property type="match status" value="1"/>
</dbReference>
<dbReference type="HAMAP" id="MF_00900">
    <property type="entry name" value="GTPase_HflX"/>
    <property type="match status" value="1"/>
</dbReference>
<dbReference type="InterPro" id="IPR030394">
    <property type="entry name" value="G_HFLX_dom"/>
</dbReference>
<dbReference type="InterPro" id="IPR006073">
    <property type="entry name" value="GTP-bd"/>
</dbReference>
<dbReference type="InterPro" id="IPR032305">
    <property type="entry name" value="GTP-bd_M"/>
</dbReference>
<dbReference type="InterPro" id="IPR016496">
    <property type="entry name" value="GTPase_HflX"/>
</dbReference>
<dbReference type="InterPro" id="IPR025121">
    <property type="entry name" value="GTPase_HflX_N"/>
</dbReference>
<dbReference type="InterPro" id="IPR042108">
    <property type="entry name" value="GTPase_HflX_N_sf"/>
</dbReference>
<dbReference type="InterPro" id="IPR027417">
    <property type="entry name" value="P-loop_NTPase"/>
</dbReference>
<dbReference type="NCBIfam" id="TIGR03156">
    <property type="entry name" value="GTP_HflX"/>
    <property type="match status" value="1"/>
</dbReference>
<dbReference type="PANTHER" id="PTHR10229:SF0">
    <property type="entry name" value="GTP-BINDING PROTEIN 6-RELATED"/>
    <property type="match status" value="1"/>
</dbReference>
<dbReference type="PANTHER" id="PTHR10229">
    <property type="entry name" value="GTP-BINDING PROTEIN HFLX"/>
    <property type="match status" value="1"/>
</dbReference>
<dbReference type="Pfam" id="PF16360">
    <property type="entry name" value="GTP-bdg_M"/>
    <property type="match status" value="1"/>
</dbReference>
<dbReference type="Pfam" id="PF13167">
    <property type="entry name" value="GTP-bdg_N"/>
    <property type="match status" value="1"/>
</dbReference>
<dbReference type="Pfam" id="PF01926">
    <property type="entry name" value="MMR_HSR1"/>
    <property type="match status" value="1"/>
</dbReference>
<dbReference type="PIRSF" id="PIRSF006809">
    <property type="entry name" value="GTP-binding_hflX_prd"/>
    <property type="match status" value="1"/>
</dbReference>
<dbReference type="SUPFAM" id="SSF52540">
    <property type="entry name" value="P-loop containing nucleoside triphosphate hydrolases"/>
    <property type="match status" value="1"/>
</dbReference>
<dbReference type="PROSITE" id="PS51705">
    <property type="entry name" value="G_HFLX"/>
    <property type="match status" value="1"/>
</dbReference>
<gene>
    <name evidence="1" type="primary">hflX</name>
    <name type="ordered locus">Amuc_0587</name>
</gene>
<accession>B2UPE7</accession>
<reference key="1">
    <citation type="journal article" date="2011" name="PLoS ONE">
        <title>The genome of Akkermansia muciniphila, a dedicated intestinal mucin degrader, and its use in exploring intestinal metagenomes.</title>
        <authorList>
            <person name="van Passel M.W."/>
            <person name="Kant R."/>
            <person name="Zoetendal E.G."/>
            <person name="Plugge C.M."/>
            <person name="Derrien M."/>
            <person name="Malfatti S.A."/>
            <person name="Chain P.S."/>
            <person name="Woyke T."/>
            <person name="Palva A."/>
            <person name="de Vos W.M."/>
            <person name="Smidt H."/>
        </authorList>
    </citation>
    <scope>NUCLEOTIDE SEQUENCE [LARGE SCALE GENOMIC DNA]</scope>
    <source>
        <strain>ATCC BAA-835 / DSM 22959 / JCM 33894 / BCRC 81048 / CCUG 64013 / CIP 107961 / Muc</strain>
    </source>
</reference>
<name>HFLX_AKKM8</name>
<keyword id="KW-0963">Cytoplasm</keyword>
<keyword id="KW-0342">GTP-binding</keyword>
<keyword id="KW-0460">Magnesium</keyword>
<keyword id="KW-0479">Metal-binding</keyword>
<keyword id="KW-0547">Nucleotide-binding</keyword>
<keyword id="KW-1185">Reference proteome</keyword>
<evidence type="ECO:0000255" key="1">
    <source>
        <dbReference type="HAMAP-Rule" id="MF_00900"/>
    </source>
</evidence>
<evidence type="ECO:0000256" key="2">
    <source>
        <dbReference type="SAM" id="MobiDB-lite"/>
    </source>
</evidence>
<sequence>MFEIREKPEMVERAMLVSVYFDPSEAGEKQAMLDELEDLVSNLGIGIAGKHLIKSRDMHAKFLCGTGKAQEVKQLALDCRADCVVFDNMLSPSQQREWERLVDECVIDREEVILDIFARRARTREATLQVELARMQYSLPRMARMWNHLDRQGGGSGGGKGGGGAARGEGEKQIEVDRRLARARIEAIQRELVLVTRQRATQRKERERQAVATAAIVGYTNAGKSSLLSLVSGSEVMARDMLFATLDTTTRKIELPHGQPLLLTDTVGFIRNLPHRLVEAFKSTLEEAVLADFLIQVVDASDPEAVRHYETTLEVLNELGAGDKPMIVVLNKVDLVPEERRGALETLLAPHFSGRVVPMSVKEGNGEGDLLNACVEMLESRVRRARFLIPYTRSDLVAAMHSEGKVFSTEYVEEGTLLEAVLPVAFYNKLESFLADR</sequence>
<proteinExistence type="inferred from homology"/>
<protein>
    <recommendedName>
        <fullName evidence="1">GTPase HflX</fullName>
    </recommendedName>
    <alternativeName>
        <fullName evidence="1">GTP-binding protein HflX</fullName>
    </alternativeName>
</protein>
<organism>
    <name type="scientific">Akkermansia muciniphila (strain ATCC BAA-835 / DSM 22959 / JCM 33894 / BCRC 81048 / CCUG 64013 / CIP 107961 / Muc)</name>
    <dbReference type="NCBI Taxonomy" id="349741"/>
    <lineage>
        <taxon>Bacteria</taxon>
        <taxon>Pseudomonadati</taxon>
        <taxon>Verrucomicrobiota</taxon>
        <taxon>Verrucomicrobiia</taxon>
        <taxon>Verrucomicrobiales</taxon>
        <taxon>Akkermansiaceae</taxon>
        <taxon>Akkermansia</taxon>
    </lineage>
</organism>
<comment type="function">
    <text evidence="1">GTPase that associates with the 50S ribosomal subunit and may have a role during protein synthesis or ribosome biogenesis.</text>
</comment>
<comment type="cofactor">
    <cofactor evidence="1">
        <name>Mg(2+)</name>
        <dbReference type="ChEBI" id="CHEBI:18420"/>
    </cofactor>
</comment>
<comment type="subunit">
    <text evidence="1">Monomer. Associates with the 50S ribosomal subunit.</text>
</comment>
<comment type="subcellular location">
    <subcellularLocation>
        <location evidence="1">Cytoplasm</location>
    </subcellularLocation>
    <text evidence="1">May associate with membranes.</text>
</comment>
<comment type="similarity">
    <text evidence="1">Belongs to the TRAFAC class OBG-HflX-like GTPase superfamily. HflX GTPase family.</text>
</comment>
<feature type="chain" id="PRO_0000412653" description="GTPase HflX">
    <location>
        <begin position="1"/>
        <end position="437"/>
    </location>
</feature>
<feature type="domain" description="Hflx-type G" evidence="1">
    <location>
        <begin position="212"/>
        <end position="382"/>
    </location>
</feature>
<feature type="region of interest" description="Disordered" evidence="2">
    <location>
        <begin position="150"/>
        <end position="173"/>
    </location>
</feature>
<feature type="compositionally biased region" description="Gly residues" evidence="2">
    <location>
        <begin position="152"/>
        <end position="167"/>
    </location>
</feature>
<feature type="binding site" evidence="1">
    <location>
        <begin position="218"/>
        <end position="225"/>
    </location>
    <ligand>
        <name>GTP</name>
        <dbReference type="ChEBI" id="CHEBI:37565"/>
    </ligand>
</feature>
<feature type="binding site" evidence="1">
    <location>
        <position position="225"/>
    </location>
    <ligand>
        <name>Mg(2+)</name>
        <dbReference type="ChEBI" id="CHEBI:18420"/>
    </ligand>
</feature>
<feature type="binding site" evidence="1">
    <location>
        <begin position="243"/>
        <end position="247"/>
    </location>
    <ligand>
        <name>GTP</name>
        <dbReference type="ChEBI" id="CHEBI:37565"/>
    </ligand>
</feature>
<feature type="binding site" evidence="1">
    <location>
        <position position="245"/>
    </location>
    <ligand>
        <name>Mg(2+)</name>
        <dbReference type="ChEBI" id="CHEBI:18420"/>
    </ligand>
</feature>
<feature type="binding site" evidence="1">
    <location>
        <begin position="265"/>
        <end position="268"/>
    </location>
    <ligand>
        <name>GTP</name>
        <dbReference type="ChEBI" id="CHEBI:37565"/>
    </ligand>
</feature>
<feature type="binding site" evidence="1">
    <location>
        <begin position="331"/>
        <end position="334"/>
    </location>
    <ligand>
        <name>GTP</name>
        <dbReference type="ChEBI" id="CHEBI:37565"/>
    </ligand>
</feature>
<feature type="binding site" evidence="1">
    <location>
        <begin position="360"/>
        <end position="362"/>
    </location>
    <ligand>
        <name>GTP</name>
        <dbReference type="ChEBI" id="CHEBI:37565"/>
    </ligand>
</feature>